<dbReference type="EC" id="2.7.7.72" evidence="1"/>
<dbReference type="EC" id="3.1.3.-" evidence="1"/>
<dbReference type="EC" id="3.1.4.-" evidence="1"/>
<dbReference type="EMBL" id="CP000821">
    <property type="protein sequence ID" value="ABV35695.1"/>
    <property type="molecule type" value="Genomic_DNA"/>
</dbReference>
<dbReference type="RefSeq" id="WP_012141431.1">
    <property type="nucleotide sequence ID" value="NC_009831.1"/>
</dbReference>
<dbReference type="SMR" id="A8FS72"/>
<dbReference type="STRING" id="425104.Ssed_1084"/>
<dbReference type="KEGG" id="sse:Ssed_1084"/>
<dbReference type="eggNOG" id="COG0617">
    <property type="taxonomic scope" value="Bacteria"/>
</dbReference>
<dbReference type="HOGENOM" id="CLU_015961_1_1_6"/>
<dbReference type="OrthoDB" id="9805698at2"/>
<dbReference type="Proteomes" id="UP000002015">
    <property type="component" value="Chromosome"/>
</dbReference>
<dbReference type="GO" id="GO:0005524">
    <property type="term" value="F:ATP binding"/>
    <property type="evidence" value="ECO:0007669"/>
    <property type="project" value="UniProtKB-UniRule"/>
</dbReference>
<dbReference type="GO" id="GO:0004810">
    <property type="term" value="F:CCA tRNA nucleotidyltransferase activity"/>
    <property type="evidence" value="ECO:0007669"/>
    <property type="project" value="UniProtKB-UniRule"/>
</dbReference>
<dbReference type="GO" id="GO:0004112">
    <property type="term" value="F:cyclic-nucleotide phosphodiesterase activity"/>
    <property type="evidence" value="ECO:0007669"/>
    <property type="project" value="UniProtKB-UniRule"/>
</dbReference>
<dbReference type="GO" id="GO:0000287">
    <property type="term" value="F:magnesium ion binding"/>
    <property type="evidence" value="ECO:0007669"/>
    <property type="project" value="UniProtKB-UniRule"/>
</dbReference>
<dbReference type="GO" id="GO:0016791">
    <property type="term" value="F:phosphatase activity"/>
    <property type="evidence" value="ECO:0007669"/>
    <property type="project" value="UniProtKB-UniRule"/>
</dbReference>
<dbReference type="GO" id="GO:0000049">
    <property type="term" value="F:tRNA binding"/>
    <property type="evidence" value="ECO:0007669"/>
    <property type="project" value="UniProtKB-UniRule"/>
</dbReference>
<dbReference type="GO" id="GO:0042245">
    <property type="term" value="P:RNA repair"/>
    <property type="evidence" value="ECO:0007669"/>
    <property type="project" value="UniProtKB-KW"/>
</dbReference>
<dbReference type="GO" id="GO:0001680">
    <property type="term" value="P:tRNA 3'-terminal CCA addition"/>
    <property type="evidence" value="ECO:0007669"/>
    <property type="project" value="UniProtKB-UniRule"/>
</dbReference>
<dbReference type="CDD" id="cd00077">
    <property type="entry name" value="HDc"/>
    <property type="match status" value="1"/>
</dbReference>
<dbReference type="CDD" id="cd05398">
    <property type="entry name" value="NT_ClassII-CCAase"/>
    <property type="match status" value="1"/>
</dbReference>
<dbReference type="FunFam" id="1.10.3090.10:FF:000001">
    <property type="entry name" value="Multifunctional CCA protein"/>
    <property type="match status" value="1"/>
</dbReference>
<dbReference type="Gene3D" id="3.30.460.10">
    <property type="entry name" value="Beta Polymerase, domain 2"/>
    <property type="match status" value="1"/>
</dbReference>
<dbReference type="Gene3D" id="1.10.3090.10">
    <property type="entry name" value="cca-adding enzyme, domain 2"/>
    <property type="match status" value="1"/>
</dbReference>
<dbReference type="HAMAP" id="MF_01261">
    <property type="entry name" value="CCA_bact_type1"/>
    <property type="match status" value="1"/>
</dbReference>
<dbReference type="HAMAP" id="MF_01262">
    <property type="entry name" value="CCA_bact_type2"/>
    <property type="match status" value="1"/>
</dbReference>
<dbReference type="InterPro" id="IPR012006">
    <property type="entry name" value="CCA_bact"/>
</dbReference>
<dbReference type="InterPro" id="IPR003607">
    <property type="entry name" value="HD/PDEase_dom"/>
</dbReference>
<dbReference type="InterPro" id="IPR006674">
    <property type="entry name" value="HD_domain"/>
</dbReference>
<dbReference type="InterPro" id="IPR043519">
    <property type="entry name" value="NT_sf"/>
</dbReference>
<dbReference type="InterPro" id="IPR002646">
    <property type="entry name" value="PolA_pol_head_dom"/>
</dbReference>
<dbReference type="InterPro" id="IPR032828">
    <property type="entry name" value="PolyA_RNA-bd"/>
</dbReference>
<dbReference type="InterPro" id="IPR050124">
    <property type="entry name" value="tRNA_CCA-adding_enzyme"/>
</dbReference>
<dbReference type="NCBIfam" id="NF008137">
    <property type="entry name" value="PRK10885.1"/>
    <property type="match status" value="1"/>
</dbReference>
<dbReference type="PANTHER" id="PTHR47545">
    <property type="entry name" value="MULTIFUNCTIONAL CCA PROTEIN"/>
    <property type="match status" value="1"/>
</dbReference>
<dbReference type="PANTHER" id="PTHR47545:SF1">
    <property type="entry name" value="MULTIFUNCTIONAL CCA PROTEIN"/>
    <property type="match status" value="1"/>
</dbReference>
<dbReference type="Pfam" id="PF01966">
    <property type="entry name" value="HD"/>
    <property type="match status" value="1"/>
</dbReference>
<dbReference type="Pfam" id="PF01743">
    <property type="entry name" value="PolyA_pol"/>
    <property type="match status" value="1"/>
</dbReference>
<dbReference type="Pfam" id="PF12627">
    <property type="entry name" value="PolyA_pol_RNAbd"/>
    <property type="match status" value="1"/>
</dbReference>
<dbReference type="PIRSF" id="PIRSF000813">
    <property type="entry name" value="CCA_bact"/>
    <property type="match status" value="1"/>
</dbReference>
<dbReference type="SMART" id="SM00471">
    <property type="entry name" value="HDc"/>
    <property type="match status" value="1"/>
</dbReference>
<dbReference type="SUPFAM" id="SSF81301">
    <property type="entry name" value="Nucleotidyltransferase"/>
    <property type="match status" value="1"/>
</dbReference>
<dbReference type="SUPFAM" id="SSF81891">
    <property type="entry name" value="Poly A polymerase C-terminal region-like"/>
    <property type="match status" value="1"/>
</dbReference>
<dbReference type="PROSITE" id="PS51831">
    <property type="entry name" value="HD"/>
    <property type="match status" value="1"/>
</dbReference>
<evidence type="ECO:0000255" key="1">
    <source>
        <dbReference type="HAMAP-Rule" id="MF_01261"/>
    </source>
</evidence>
<reference key="1">
    <citation type="submission" date="2007-08" db="EMBL/GenBank/DDBJ databases">
        <title>Complete sequence of Shewanella sediminis HAW-EB3.</title>
        <authorList>
            <consortium name="US DOE Joint Genome Institute"/>
            <person name="Copeland A."/>
            <person name="Lucas S."/>
            <person name="Lapidus A."/>
            <person name="Barry K."/>
            <person name="Glavina del Rio T."/>
            <person name="Dalin E."/>
            <person name="Tice H."/>
            <person name="Pitluck S."/>
            <person name="Chertkov O."/>
            <person name="Brettin T."/>
            <person name="Bruce D."/>
            <person name="Detter J.C."/>
            <person name="Han C."/>
            <person name="Schmutz J."/>
            <person name="Larimer F."/>
            <person name="Land M."/>
            <person name="Hauser L."/>
            <person name="Kyrpides N."/>
            <person name="Kim E."/>
            <person name="Zhao J.-S."/>
            <person name="Richardson P."/>
        </authorList>
    </citation>
    <scope>NUCLEOTIDE SEQUENCE [LARGE SCALE GENOMIC DNA]</scope>
    <source>
        <strain>HAW-EB3</strain>
    </source>
</reference>
<keyword id="KW-0067">ATP-binding</keyword>
<keyword id="KW-0378">Hydrolase</keyword>
<keyword id="KW-0460">Magnesium</keyword>
<keyword id="KW-0479">Metal-binding</keyword>
<keyword id="KW-0511">Multifunctional enzyme</keyword>
<keyword id="KW-0533">Nickel</keyword>
<keyword id="KW-0547">Nucleotide-binding</keyword>
<keyword id="KW-0548">Nucleotidyltransferase</keyword>
<keyword id="KW-1185">Reference proteome</keyword>
<keyword id="KW-0692">RNA repair</keyword>
<keyword id="KW-0694">RNA-binding</keyword>
<keyword id="KW-0808">Transferase</keyword>
<keyword id="KW-0819">tRNA processing</keyword>
<name>CCA_SHESH</name>
<proteinExistence type="inferred from homology"/>
<organism>
    <name type="scientific">Shewanella sediminis (strain HAW-EB3)</name>
    <dbReference type="NCBI Taxonomy" id="425104"/>
    <lineage>
        <taxon>Bacteria</taxon>
        <taxon>Pseudomonadati</taxon>
        <taxon>Pseudomonadota</taxon>
        <taxon>Gammaproteobacteria</taxon>
        <taxon>Alteromonadales</taxon>
        <taxon>Shewanellaceae</taxon>
        <taxon>Shewanella</taxon>
    </lineage>
</organism>
<feature type="chain" id="PRO_1000085817" description="Multifunctional CCA protein">
    <location>
        <begin position="1"/>
        <end position="413"/>
    </location>
</feature>
<feature type="domain" description="HD" evidence="1">
    <location>
        <begin position="228"/>
        <end position="329"/>
    </location>
</feature>
<feature type="binding site" evidence="1">
    <location>
        <position position="8"/>
    </location>
    <ligand>
        <name>ATP</name>
        <dbReference type="ChEBI" id="CHEBI:30616"/>
    </ligand>
</feature>
<feature type="binding site" evidence="1">
    <location>
        <position position="8"/>
    </location>
    <ligand>
        <name>CTP</name>
        <dbReference type="ChEBI" id="CHEBI:37563"/>
    </ligand>
</feature>
<feature type="binding site" evidence="1">
    <location>
        <position position="11"/>
    </location>
    <ligand>
        <name>ATP</name>
        <dbReference type="ChEBI" id="CHEBI:30616"/>
    </ligand>
</feature>
<feature type="binding site" evidence="1">
    <location>
        <position position="11"/>
    </location>
    <ligand>
        <name>CTP</name>
        <dbReference type="ChEBI" id="CHEBI:37563"/>
    </ligand>
</feature>
<feature type="binding site" evidence="1">
    <location>
        <position position="21"/>
    </location>
    <ligand>
        <name>Mg(2+)</name>
        <dbReference type="ChEBI" id="CHEBI:18420"/>
    </ligand>
</feature>
<feature type="binding site" evidence="1">
    <location>
        <position position="23"/>
    </location>
    <ligand>
        <name>Mg(2+)</name>
        <dbReference type="ChEBI" id="CHEBI:18420"/>
    </ligand>
</feature>
<feature type="binding site" evidence="1">
    <location>
        <position position="91"/>
    </location>
    <ligand>
        <name>ATP</name>
        <dbReference type="ChEBI" id="CHEBI:30616"/>
    </ligand>
</feature>
<feature type="binding site" evidence="1">
    <location>
        <position position="91"/>
    </location>
    <ligand>
        <name>CTP</name>
        <dbReference type="ChEBI" id="CHEBI:37563"/>
    </ligand>
</feature>
<feature type="binding site" evidence="1">
    <location>
        <position position="137"/>
    </location>
    <ligand>
        <name>ATP</name>
        <dbReference type="ChEBI" id="CHEBI:30616"/>
    </ligand>
</feature>
<feature type="binding site" evidence="1">
    <location>
        <position position="137"/>
    </location>
    <ligand>
        <name>CTP</name>
        <dbReference type="ChEBI" id="CHEBI:37563"/>
    </ligand>
</feature>
<feature type="binding site" evidence="1">
    <location>
        <position position="140"/>
    </location>
    <ligand>
        <name>ATP</name>
        <dbReference type="ChEBI" id="CHEBI:30616"/>
    </ligand>
</feature>
<feature type="binding site" evidence="1">
    <location>
        <position position="140"/>
    </location>
    <ligand>
        <name>CTP</name>
        <dbReference type="ChEBI" id="CHEBI:37563"/>
    </ligand>
</feature>
<accession>A8FS72</accession>
<comment type="function">
    <text evidence="1">Catalyzes the addition and repair of the essential 3'-terminal CCA sequence in tRNAs without using a nucleic acid template. Adds these three nucleotides in the order of C, C, and A to the tRNA nucleotide-73, using CTP and ATP as substrates and producing inorganic pyrophosphate. tRNA 3'-terminal CCA addition is required both for tRNA processing and repair. Also involved in tRNA surveillance by mediating tandem CCA addition to generate a CCACCA at the 3' terminus of unstable tRNAs. While stable tRNAs receive only 3'-terminal CCA, unstable tRNAs are marked with CCACCA and rapidly degraded.</text>
</comment>
<comment type="catalytic activity">
    <reaction evidence="1">
        <text>a tRNA precursor + 2 CTP + ATP = a tRNA with a 3' CCA end + 3 diphosphate</text>
        <dbReference type="Rhea" id="RHEA:14433"/>
        <dbReference type="Rhea" id="RHEA-COMP:10465"/>
        <dbReference type="Rhea" id="RHEA-COMP:10468"/>
        <dbReference type="ChEBI" id="CHEBI:30616"/>
        <dbReference type="ChEBI" id="CHEBI:33019"/>
        <dbReference type="ChEBI" id="CHEBI:37563"/>
        <dbReference type="ChEBI" id="CHEBI:74896"/>
        <dbReference type="ChEBI" id="CHEBI:83071"/>
        <dbReference type="EC" id="2.7.7.72"/>
    </reaction>
</comment>
<comment type="catalytic activity">
    <reaction evidence="1">
        <text>a tRNA with a 3' CCA end + 2 CTP + ATP = a tRNA with a 3' CCACCA end + 3 diphosphate</text>
        <dbReference type="Rhea" id="RHEA:76235"/>
        <dbReference type="Rhea" id="RHEA-COMP:10468"/>
        <dbReference type="Rhea" id="RHEA-COMP:18655"/>
        <dbReference type="ChEBI" id="CHEBI:30616"/>
        <dbReference type="ChEBI" id="CHEBI:33019"/>
        <dbReference type="ChEBI" id="CHEBI:37563"/>
        <dbReference type="ChEBI" id="CHEBI:83071"/>
        <dbReference type="ChEBI" id="CHEBI:195187"/>
    </reaction>
    <physiologicalReaction direction="left-to-right" evidence="1">
        <dbReference type="Rhea" id="RHEA:76236"/>
    </physiologicalReaction>
</comment>
<comment type="cofactor">
    <cofactor evidence="1">
        <name>Mg(2+)</name>
        <dbReference type="ChEBI" id="CHEBI:18420"/>
    </cofactor>
    <text evidence="1">Magnesium is required for nucleotidyltransferase activity.</text>
</comment>
<comment type="cofactor">
    <cofactor evidence="1">
        <name>Ni(2+)</name>
        <dbReference type="ChEBI" id="CHEBI:49786"/>
    </cofactor>
    <text evidence="1">Nickel for phosphatase activity.</text>
</comment>
<comment type="subunit">
    <text evidence="1">Monomer. Can also form homodimers and oligomers.</text>
</comment>
<comment type="domain">
    <text evidence="1">Comprises two domains: an N-terminal domain containing the nucleotidyltransferase activity and a C-terminal HD domain associated with both phosphodiesterase and phosphatase activities.</text>
</comment>
<comment type="miscellaneous">
    <text evidence="1">A single active site specifically recognizes both ATP and CTP and is responsible for their addition.</text>
</comment>
<comment type="similarity">
    <text evidence="1">Belongs to the tRNA nucleotidyltransferase/poly(A) polymerase family. Bacterial CCA-adding enzyme type 1 subfamily.</text>
</comment>
<protein>
    <recommendedName>
        <fullName evidence="1">Multifunctional CCA protein</fullName>
    </recommendedName>
    <domain>
        <recommendedName>
            <fullName evidence="1">CCA-adding enzyme</fullName>
            <ecNumber evidence="1">2.7.7.72</ecNumber>
        </recommendedName>
        <alternativeName>
            <fullName evidence="1">CCA tRNA nucleotidyltransferase</fullName>
        </alternativeName>
        <alternativeName>
            <fullName evidence="1">tRNA CCA-pyrophosphorylase</fullName>
        </alternativeName>
        <alternativeName>
            <fullName evidence="1">tRNA adenylyl-/cytidylyl-transferase</fullName>
        </alternativeName>
        <alternativeName>
            <fullName evidence="1">tRNA nucleotidyltransferase</fullName>
        </alternativeName>
        <alternativeName>
            <fullName evidence="1">tRNA-NT</fullName>
        </alternativeName>
    </domain>
    <domain>
        <recommendedName>
            <fullName evidence="1">2'-nucleotidase</fullName>
            <ecNumber evidence="1">3.1.3.-</ecNumber>
        </recommendedName>
    </domain>
    <domain>
        <recommendedName>
            <fullName evidence="1">2',3'-cyclic phosphodiesterase</fullName>
            <ecNumber evidence="1">3.1.4.-</ecNumber>
        </recommendedName>
    </domain>
    <domain>
        <recommendedName>
            <fullName evidence="1">Phosphatase</fullName>
            <ecNumber evidence="1">3.1.3.-</ecNumber>
        </recommendedName>
    </domain>
</protein>
<gene>
    <name evidence="1" type="primary">cca</name>
    <name type="ordered locus">Ssed_1084</name>
</gene>
<sequence>MKFYLVGGAVRDNLLNLTVKDRDHMVVGATPQQMLEMGYRQVGKDFPVFLHPETGQEYALARTERKTGVGYGGFSCHASPDVTLEEDLLRRDLTINAIAQDEEGQLYDPYGGVDDINNRVLRHVSDAFVEDPLRVLRVARFAARFHRQGFTIADETLAMMTQISHSGELEALTAERVFLELDKALATDSPQVFIHVLNQCDALAILFPEIHALFGVPQPVKWHPEIDTGIHTLMVLEQAAKLCDDNSVRFAALVHDLGKALSPKEHLPKHHGHGQKGLALIKVLCARVRVPNDYRDLALLVSDLHQNIHQIEELRPDTLVKIFDKADLWRKPERLEQIALACEADAKGRLGQEEWSYPQADYFKQCFMAANKVAVKPIIEAGFKGAEIKAQLQLKRIEAVAEIKQNLNQTDSP</sequence>